<feature type="chain" id="PRO_0000114965" description="Pyrimidine pathway regulatory protein 1">
    <location>
        <begin position="1"/>
        <end position="904"/>
    </location>
</feature>
<feature type="DNA-binding region" description="Zn(2)-C6 fungal-type" evidence="1">
    <location>
        <begin position="34"/>
        <end position="61"/>
    </location>
</feature>
<feature type="region of interest" description="Disordered" evidence="2">
    <location>
        <begin position="1"/>
        <end position="27"/>
    </location>
</feature>
<feature type="region of interest" description="Disordered" evidence="2">
    <location>
        <begin position="883"/>
        <end position="904"/>
    </location>
</feature>
<feature type="compositionally biased region" description="Basic residues" evidence="2">
    <location>
        <begin position="1"/>
        <end position="11"/>
    </location>
</feature>
<feature type="compositionally biased region" description="Basic and acidic residues" evidence="2">
    <location>
        <begin position="12"/>
        <end position="21"/>
    </location>
</feature>
<feature type="binding site">
    <location>
        <position position="34"/>
    </location>
    <ligand>
        <name>Zn(2+)</name>
        <dbReference type="ChEBI" id="CHEBI:29105"/>
        <label>1</label>
    </ligand>
</feature>
<feature type="binding site">
    <location>
        <position position="34"/>
    </location>
    <ligand>
        <name>Zn(2+)</name>
        <dbReference type="ChEBI" id="CHEBI:29105"/>
        <label>2</label>
    </ligand>
</feature>
<feature type="binding site">
    <location>
        <position position="37"/>
    </location>
    <ligand>
        <name>Zn(2+)</name>
        <dbReference type="ChEBI" id="CHEBI:29105"/>
        <label>1</label>
    </ligand>
</feature>
<feature type="binding site">
    <location>
        <position position="44"/>
    </location>
    <ligand>
        <name>Zn(2+)</name>
        <dbReference type="ChEBI" id="CHEBI:29105"/>
        <label>1</label>
    </ligand>
</feature>
<feature type="binding site">
    <location>
        <position position="51"/>
    </location>
    <ligand>
        <name>Zn(2+)</name>
        <dbReference type="ChEBI" id="CHEBI:29105"/>
        <label>1</label>
    </ligand>
</feature>
<feature type="binding site">
    <location>
        <position position="51"/>
    </location>
    <ligand>
        <name>Zn(2+)</name>
        <dbReference type="ChEBI" id="CHEBI:29105"/>
        <label>2</label>
    </ligand>
</feature>
<feature type="binding site">
    <location>
        <position position="54"/>
    </location>
    <ligand>
        <name>Zn(2+)</name>
        <dbReference type="ChEBI" id="CHEBI:29105"/>
        <label>2</label>
    </ligand>
</feature>
<feature type="binding site">
    <location>
        <position position="61"/>
    </location>
    <ligand>
        <name>Zn(2+)</name>
        <dbReference type="ChEBI" id="CHEBI:29105"/>
        <label>2</label>
    </ligand>
</feature>
<feature type="helix" evidence="3">
    <location>
        <begin position="35"/>
        <end position="40"/>
    </location>
</feature>
<feature type="helix" evidence="3">
    <location>
        <begin position="52"/>
        <end position="56"/>
    </location>
</feature>
<feature type="strand" evidence="3">
    <location>
        <begin position="62"/>
        <end position="64"/>
    </location>
</feature>
<feature type="turn" evidence="3">
    <location>
        <begin position="66"/>
        <end position="68"/>
    </location>
</feature>
<feature type="strand" evidence="3">
    <location>
        <begin position="71"/>
        <end position="73"/>
    </location>
</feature>
<feature type="helix" evidence="3">
    <location>
        <begin position="74"/>
        <end position="93"/>
    </location>
</feature>
<feature type="turn" evidence="3">
    <location>
        <begin position="114"/>
        <end position="116"/>
    </location>
</feature>
<keyword id="KW-0002">3D-structure</keyword>
<keyword id="KW-0010">Activator</keyword>
<keyword id="KW-0238">DNA-binding</keyword>
<keyword id="KW-0479">Metal-binding</keyword>
<keyword id="KW-0539">Nucleus</keyword>
<keyword id="KW-0665">Pyrimidine biosynthesis</keyword>
<keyword id="KW-1185">Reference proteome</keyword>
<keyword id="KW-0804">Transcription</keyword>
<keyword id="KW-0805">Transcription regulation</keyword>
<keyword id="KW-0862">Zinc</keyword>
<protein>
    <recommendedName>
        <fullName>Pyrimidine pathway regulatory protein 1</fullName>
    </recommendedName>
</protein>
<proteinExistence type="evidence at protein level"/>
<gene>
    <name type="primary">PPR1</name>
    <name type="ordered locus">YLR014C</name>
</gene>
<dbReference type="EMBL" id="X01739">
    <property type="protein sequence ID" value="CAA25876.1"/>
    <property type="molecule type" value="Genomic_DNA"/>
</dbReference>
<dbReference type="EMBL" id="Z73186">
    <property type="protein sequence ID" value="CAA97536.1"/>
    <property type="molecule type" value="Genomic_DNA"/>
</dbReference>
<dbReference type="EMBL" id="X90564">
    <property type="protein sequence ID" value="CAA62160.1"/>
    <property type="molecule type" value="Genomic_DNA"/>
</dbReference>
<dbReference type="EMBL" id="BK006945">
    <property type="protein sequence ID" value="DAA09332.1"/>
    <property type="molecule type" value="Genomic_DNA"/>
</dbReference>
<dbReference type="PIR" id="S05877">
    <property type="entry name" value="RGBYP1"/>
</dbReference>
<dbReference type="RefSeq" id="NP_013114.1">
    <property type="nucleotide sequence ID" value="NM_001181901.1"/>
</dbReference>
<dbReference type="PDB" id="1PYI">
    <property type="method" value="X-ray"/>
    <property type="resolution" value="3.20 A"/>
    <property type="chains" value="A/B=29-123"/>
</dbReference>
<dbReference type="PDBsum" id="1PYI"/>
<dbReference type="SMR" id="P07272"/>
<dbReference type="BioGRID" id="31288">
    <property type="interactions" value="111"/>
</dbReference>
<dbReference type="DIP" id="DIP-2126N"/>
<dbReference type="FunCoup" id="P07272">
    <property type="interactions" value="272"/>
</dbReference>
<dbReference type="IntAct" id="P07272">
    <property type="interactions" value="3"/>
</dbReference>
<dbReference type="MINT" id="P07272"/>
<dbReference type="STRING" id="4932.YLR014C"/>
<dbReference type="iPTMnet" id="P07272"/>
<dbReference type="PaxDb" id="4932-YLR014C"/>
<dbReference type="PeptideAtlas" id="P07272"/>
<dbReference type="EnsemblFungi" id="YLR014C_mRNA">
    <property type="protein sequence ID" value="YLR014C"/>
    <property type="gene ID" value="YLR014C"/>
</dbReference>
<dbReference type="GeneID" id="850701"/>
<dbReference type="KEGG" id="sce:YLR014C"/>
<dbReference type="AGR" id="SGD:S000004004"/>
<dbReference type="SGD" id="S000004004">
    <property type="gene designation" value="PPR1"/>
</dbReference>
<dbReference type="VEuPathDB" id="FungiDB:YLR014C"/>
<dbReference type="eggNOG" id="ENOG502QR1M">
    <property type="taxonomic scope" value="Eukaryota"/>
</dbReference>
<dbReference type="HOGENOM" id="CLU_004517_1_1_1"/>
<dbReference type="InParanoid" id="P07272"/>
<dbReference type="OMA" id="HANPQMP"/>
<dbReference type="OrthoDB" id="2399539at2759"/>
<dbReference type="BioCyc" id="YEAST:G3O-32175-MONOMER"/>
<dbReference type="BioGRID-ORCS" id="850701">
    <property type="hits" value="2 hits in 13 CRISPR screens"/>
</dbReference>
<dbReference type="EvolutionaryTrace" id="P07272"/>
<dbReference type="PRO" id="PR:P07272"/>
<dbReference type="Proteomes" id="UP000002311">
    <property type="component" value="Chromosome XII"/>
</dbReference>
<dbReference type="RNAct" id="P07272">
    <property type="molecule type" value="protein"/>
</dbReference>
<dbReference type="GO" id="GO:0005634">
    <property type="term" value="C:nucleus"/>
    <property type="evidence" value="ECO:0000305"/>
    <property type="project" value="SGD"/>
</dbReference>
<dbReference type="GO" id="GO:0000981">
    <property type="term" value="F:DNA-binding transcription factor activity, RNA polymerase II-specific"/>
    <property type="evidence" value="ECO:0000314"/>
    <property type="project" value="SGD"/>
</dbReference>
<dbReference type="GO" id="GO:0043565">
    <property type="term" value="F:sequence-specific DNA binding"/>
    <property type="evidence" value="ECO:0000314"/>
    <property type="project" value="SGD"/>
</dbReference>
<dbReference type="GO" id="GO:0008270">
    <property type="term" value="F:zinc ion binding"/>
    <property type="evidence" value="ECO:0000314"/>
    <property type="project" value="SGD"/>
</dbReference>
<dbReference type="GO" id="GO:0006351">
    <property type="term" value="P:DNA-templated transcription"/>
    <property type="evidence" value="ECO:0007669"/>
    <property type="project" value="InterPro"/>
</dbReference>
<dbReference type="GO" id="GO:1900399">
    <property type="term" value="P:positive regulation of pyrimidine nucleotide biosynthetic process"/>
    <property type="evidence" value="ECO:0000315"/>
    <property type="project" value="SGD"/>
</dbReference>
<dbReference type="GO" id="GO:0045944">
    <property type="term" value="P:positive regulation of transcription by RNA polymerase II"/>
    <property type="evidence" value="ECO:0000314"/>
    <property type="project" value="SGD"/>
</dbReference>
<dbReference type="GO" id="GO:0006221">
    <property type="term" value="P:pyrimidine nucleotide biosynthetic process"/>
    <property type="evidence" value="ECO:0007669"/>
    <property type="project" value="UniProtKB-KW"/>
</dbReference>
<dbReference type="CDD" id="cd12148">
    <property type="entry name" value="fungal_TF_MHR"/>
    <property type="match status" value="1"/>
</dbReference>
<dbReference type="CDD" id="cd00067">
    <property type="entry name" value="GAL4"/>
    <property type="match status" value="1"/>
</dbReference>
<dbReference type="CDD" id="cd14723">
    <property type="entry name" value="ZIP_Ppr1"/>
    <property type="match status" value="1"/>
</dbReference>
<dbReference type="FunFam" id="4.10.240.10:FF:000044">
    <property type="entry name" value="Pyrimidine pathway regulatory protein 1"/>
    <property type="match status" value="1"/>
</dbReference>
<dbReference type="Gene3D" id="4.10.240.10">
    <property type="entry name" value="Zn(2)-C6 fungal-type DNA-binding domain"/>
    <property type="match status" value="1"/>
</dbReference>
<dbReference type="InterPro" id="IPR046347">
    <property type="entry name" value="bZIP_sf"/>
</dbReference>
<dbReference type="InterPro" id="IPR007219">
    <property type="entry name" value="Transcription_factor_dom_fun"/>
</dbReference>
<dbReference type="InterPro" id="IPR052202">
    <property type="entry name" value="Yeast_MetPath_Reg"/>
</dbReference>
<dbReference type="InterPro" id="IPR036864">
    <property type="entry name" value="Zn2-C6_fun-type_DNA-bd_sf"/>
</dbReference>
<dbReference type="InterPro" id="IPR001138">
    <property type="entry name" value="Zn2Cys6_DnaBD"/>
</dbReference>
<dbReference type="PANTHER" id="PTHR47782:SF1">
    <property type="entry name" value="PYRIMIDINE PATHWAY REGULATORY PROTEIN 1"/>
    <property type="match status" value="1"/>
</dbReference>
<dbReference type="PANTHER" id="PTHR47782">
    <property type="entry name" value="ZN(II)2CYS6 TRANSCRIPTION FACTOR (EUROFUNG)-RELATED"/>
    <property type="match status" value="1"/>
</dbReference>
<dbReference type="Pfam" id="PF04082">
    <property type="entry name" value="Fungal_trans"/>
    <property type="match status" value="1"/>
</dbReference>
<dbReference type="Pfam" id="PF00172">
    <property type="entry name" value="Zn_clus"/>
    <property type="match status" value="1"/>
</dbReference>
<dbReference type="SMART" id="SM00906">
    <property type="entry name" value="Fungal_trans"/>
    <property type="match status" value="1"/>
</dbReference>
<dbReference type="SMART" id="SM00066">
    <property type="entry name" value="GAL4"/>
    <property type="match status" value="1"/>
</dbReference>
<dbReference type="SUPFAM" id="SSF57959">
    <property type="entry name" value="Leucine zipper domain"/>
    <property type="match status" value="1"/>
</dbReference>
<dbReference type="SUPFAM" id="SSF57701">
    <property type="entry name" value="Zn2/Cys6 DNA-binding domain"/>
    <property type="match status" value="1"/>
</dbReference>
<dbReference type="PROSITE" id="PS00463">
    <property type="entry name" value="ZN2_CY6_FUNGAL_1"/>
    <property type="match status" value="1"/>
</dbReference>
<dbReference type="PROSITE" id="PS50048">
    <property type="entry name" value="ZN2_CY6_FUNGAL_2"/>
    <property type="match status" value="1"/>
</dbReference>
<name>PPR1_YEAST</name>
<accession>P07272</accession>
<accession>D6VY16</accession>
<organism>
    <name type="scientific">Saccharomyces cerevisiae (strain ATCC 204508 / S288c)</name>
    <name type="common">Baker's yeast</name>
    <dbReference type="NCBI Taxonomy" id="559292"/>
    <lineage>
        <taxon>Eukaryota</taxon>
        <taxon>Fungi</taxon>
        <taxon>Dikarya</taxon>
        <taxon>Ascomycota</taxon>
        <taxon>Saccharomycotina</taxon>
        <taxon>Saccharomycetes</taxon>
        <taxon>Saccharomycetales</taxon>
        <taxon>Saccharomycetaceae</taxon>
        <taxon>Saccharomyces</taxon>
    </lineage>
</organism>
<evidence type="ECO:0000255" key="1">
    <source>
        <dbReference type="PROSITE-ProRule" id="PRU00227"/>
    </source>
</evidence>
<evidence type="ECO:0000256" key="2">
    <source>
        <dbReference type="SAM" id="MobiDB-lite"/>
    </source>
</evidence>
<evidence type="ECO:0007829" key="3">
    <source>
        <dbReference type="PDB" id="1PYI"/>
    </source>
</evidence>
<comment type="function">
    <text>Positive regulator of URA1 and URA3 expression.</text>
</comment>
<comment type="subunit">
    <text>Binds DNA as a homodimer.</text>
</comment>
<comment type="subcellular location">
    <subcellularLocation>
        <location>Nucleus</location>
    </subcellularLocation>
</comment>
<reference key="1">
    <citation type="journal article" date="1984" name="J. Mol. Biol.">
        <title>Yeast regulatory gene PPR1. I. Nucleotide sequence, restriction map and codon usage.</title>
        <authorList>
            <person name="Kammerer B."/>
            <person name="Guyonvarch A."/>
            <person name="Hubert J.-C."/>
        </authorList>
    </citation>
    <scope>NUCLEOTIDE SEQUENCE [GENOMIC DNA]</scope>
</reference>
<reference key="2">
    <citation type="journal article" date="1997" name="Nature">
        <title>The nucleotide sequence of Saccharomyces cerevisiae chromosome XII.</title>
        <authorList>
            <person name="Johnston M."/>
            <person name="Hillier L.W."/>
            <person name="Riles L."/>
            <person name="Albermann K."/>
            <person name="Andre B."/>
            <person name="Ansorge W."/>
            <person name="Benes V."/>
            <person name="Brueckner M."/>
            <person name="Delius H."/>
            <person name="Dubois E."/>
            <person name="Duesterhoeft A."/>
            <person name="Entian K.-D."/>
            <person name="Floeth M."/>
            <person name="Goffeau A."/>
            <person name="Hebling U."/>
            <person name="Heumann K."/>
            <person name="Heuss-Neitzel D."/>
            <person name="Hilbert H."/>
            <person name="Hilger F."/>
            <person name="Kleine K."/>
            <person name="Koetter P."/>
            <person name="Louis E.J."/>
            <person name="Messenguy F."/>
            <person name="Mewes H.-W."/>
            <person name="Miosga T."/>
            <person name="Moestl D."/>
            <person name="Mueller-Auer S."/>
            <person name="Nentwich U."/>
            <person name="Obermaier B."/>
            <person name="Piravandi E."/>
            <person name="Pohl T.M."/>
            <person name="Portetelle D."/>
            <person name="Purnelle B."/>
            <person name="Rechmann S."/>
            <person name="Rieger M."/>
            <person name="Rinke M."/>
            <person name="Rose M."/>
            <person name="Scharfe M."/>
            <person name="Scherens B."/>
            <person name="Scholler P."/>
            <person name="Schwager C."/>
            <person name="Schwarz S."/>
            <person name="Underwood A.P."/>
            <person name="Urrestarazu L.A."/>
            <person name="Vandenbol M."/>
            <person name="Verhasselt P."/>
            <person name="Vierendeels F."/>
            <person name="Voet M."/>
            <person name="Volckaert G."/>
            <person name="Voss H."/>
            <person name="Wambutt R."/>
            <person name="Wedler E."/>
            <person name="Wedler H."/>
            <person name="Zimmermann F.K."/>
            <person name="Zollner A."/>
            <person name="Hani J."/>
            <person name="Hoheisel J.D."/>
        </authorList>
    </citation>
    <scope>NUCLEOTIDE SEQUENCE [LARGE SCALE GENOMIC DNA]</scope>
    <source>
        <strain>ATCC 204508 / S288c</strain>
    </source>
</reference>
<reference key="3">
    <citation type="journal article" date="2014" name="G3 (Bethesda)">
        <title>The reference genome sequence of Saccharomyces cerevisiae: Then and now.</title>
        <authorList>
            <person name="Engel S.R."/>
            <person name="Dietrich F.S."/>
            <person name="Fisk D.G."/>
            <person name="Binkley G."/>
            <person name="Balakrishnan R."/>
            <person name="Costanzo M.C."/>
            <person name="Dwight S.S."/>
            <person name="Hitz B.C."/>
            <person name="Karra K."/>
            <person name="Nash R.S."/>
            <person name="Weng S."/>
            <person name="Wong E.D."/>
            <person name="Lloyd P."/>
            <person name="Skrzypek M.S."/>
            <person name="Miyasato S.R."/>
            <person name="Simison M."/>
            <person name="Cherry J.M."/>
        </authorList>
    </citation>
    <scope>GENOME REANNOTATION</scope>
    <source>
        <strain>ATCC 204508 / S288c</strain>
    </source>
</reference>
<reference key="4">
    <citation type="submission" date="1995-09" db="EMBL/GenBank/DDBJ databases">
        <title>A 7.8kb fragment from chromosome XII of Saccharomyces cerevisiae does not harbour PKC2.</title>
        <authorList>
            <person name="Saville S.P."/>
            <person name="Atkinson S."/>
            <person name="Jamieson L."/>
            <person name="Pocklington M.J."/>
            <person name="Orr E."/>
        </authorList>
    </citation>
    <scope>NUCLEOTIDE SEQUENCE [GENOMIC DNA] OF 1-513</scope>
    <source>
        <strain>ATCC 204508 / S288c</strain>
    </source>
</reference>
<reference key="5">
    <citation type="journal article" date="2008" name="Mol. Cell. Proteomics">
        <title>A multidimensional chromatography technology for in-depth phosphoproteome analysis.</title>
        <authorList>
            <person name="Albuquerque C.P."/>
            <person name="Smolka M.B."/>
            <person name="Payne S.H."/>
            <person name="Bafna V."/>
            <person name="Eng J."/>
            <person name="Zhou H."/>
        </authorList>
    </citation>
    <scope>IDENTIFICATION BY MASS SPECTROMETRY [LARGE SCALE ANALYSIS]</scope>
</reference>
<reference key="6">
    <citation type="journal article" date="1994" name="Genes Dev.">
        <title>Crystal structure of a PPR1-DNA complex: DNA recognition by proteins containing a Zn2Cys6 binuclear cluster.</title>
        <authorList>
            <person name="Marmorstein R."/>
            <person name="Harrison S.C."/>
        </authorList>
    </citation>
    <scope>X-RAY CRYSTALLOGRAPHY (3.2 ANGSTROMS) OF 29-123</scope>
</reference>
<sequence>MKQKKFNSKKSNRTDLSKRGDSPNIGISKSRTACKRCRLKKIKCDQEFPSCKRCAKLEVPCVSLDPATGKDVPRSYVFFLEDRLAVMMRVLKEYGVDPTKIRGNIPATSDDEPFDLKKYSSVSSLGEEGILPHNGLLADYLVQKGNSMASSAITSKSMASPQTINVQRKEFLVNSKKQDGSALLPETGSPMTSDARAEELRRCNKEISALGTMRESSFNSFLGDSSGISFAKLVFTATNFRQDSGDDVLDEDIKQREQKYNGYAEAENNPHFDPLELPPRHAAEVMISRFFVDTNSQLPLLHRELFLKKYFEPIYGPWNPNIALASDQTGINSAFEIPITSAFSAHTEPKRENVTEKIDVCSSVDVPWYDTWETSQKVNMRPIVELPTKFHIPYFFLNIIFAIGHATQVLKSDITTVATYKRRATKYIASLFSSSDRLEALAGTLLMVIYSIMRPNVPGVWYTMGSVLRLTVDLGLHSEKINKNYDAFTREIRRRLFWCVYSLDRQICSYFGRPFGIPEESITTRYPSLLDDSFITLTNREIDDYSDLPSPNPSSKVIALAMYKIRRIQASIVRILYAPGAELPRRFMDLESWRIETYNELERWFQVDVPKNFEMMNCKFNSIWFDLNYHYSKSILYGLSPKFPTLNDTAFKIVLDSTKGTIDVFYNLCVNKKIGYTWVAVHNMFMTGMTYLYVNFYSKNNINDCQEKVSEYTEKVLIVLKNLIGFCESAKTCYTSYKILSSVVIKLKFMQINDAKGIFSDSNPLTSQANRMSSYDKKTNVLGFDDGTFDNKVFNRTNFEEKAPFDIPLDEFFTELEKHSNVSQFNTLDVSEGNQVINESASTNTSSALNCQSYTNNQDIMDILFQVTSGSVWDEFFVRSGNGNEGESSYDISKGKNSESGGIF</sequence>